<reference key="1">
    <citation type="submission" date="2008-06" db="EMBL/GenBank/DDBJ databases">
        <title>Complete sequence of Stenotrophomonas maltophilia R551-3.</title>
        <authorList>
            <consortium name="US DOE Joint Genome Institute"/>
            <person name="Lucas S."/>
            <person name="Copeland A."/>
            <person name="Lapidus A."/>
            <person name="Glavina del Rio T."/>
            <person name="Dalin E."/>
            <person name="Tice H."/>
            <person name="Pitluck S."/>
            <person name="Chain P."/>
            <person name="Malfatti S."/>
            <person name="Shin M."/>
            <person name="Vergez L."/>
            <person name="Lang D."/>
            <person name="Schmutz J."/>
            <person name="Larimer F."/>
            <person name="Land M."/>
            <person name="Hauser L."/>
            <person name="Kyrpides N."/>
            <person name="Mikhailova N."/>
            <person name="Taghavi S."/>
            <person name="Monchy S."/>
            <person name="Newman L."/>
            <person name="Vangronsveld J."/>
            <person name="van der Lelie D."/>
            <person name="Richardson P."/>
        </authorList>
    </citation>
    <scope>NUCLEOTIDE SEQUENCE [LARGE SCALE GENOMIC DNA]</scope>
    <source>
        <strain>R551-3</strain>
    </source>
</reference>
<evidence type="ECO:0000255" key="1">
    <source>
        <dbReference type="HAMAP-Rule" id="MF_00159"/>
    </source>
</evidence>
<evidence type="ECO:0000256" key="2">
    <source>
        <dbReference type="SAM" id="MobiDB-lite"/>
    </source>
</evidence>
<feature type="chain" id="PRO_1000097189" description="4-hydroxy-3-methylbut-2-en-1-yl diphosphate synthase (flavodoxin)">
    <location>
        <begin position="1"/>
        <end position="421"/>
    </location>
</feature>
<feature type="region of interest" description="Disordered" evidence="2">
    <location>
        <begin position="1"/>
        <end position="20"/>
    </location>
</feature>
<feature type="binding site" evidence="1">
    <location>
        <position position="311"/>
    </location>
    <ligand>
        <name>[4Fe-4S] cluster</name>
        <dbReference type="ChEBI" id="CHEBI:49883"/>
    </ligand>
</feature>
<feature type="binding site" evidence="1">
    <location>
        <position position="314"/>
    </location>
    <ligand>
        <name>[4Fe-4S] cluster</name>
        <dbReference type="ChEBI" id="CHEBI:49883"/>
    </ligand>
</feature>
<feature type="binding site" evidence="1">
    <location>
        <position position="357"/>
    </location>
    <ligand>
        <name>[4Fe-4S] cluster</name>
        <dbReference type="ChEBI" id="CHEBI:49883"/>
    </ligand>
</feature>
<feature type="binding site" evidence="1">
    <location>
        <position position="364"/>
    </location>
    <ligand>
        <name>[4Fe-4S] cluster</name>
        <dbReference type="ChEBI" id="CHEBI:49883"/>
    </ligand>
</feature>
<gene>
    <name evidence="1" type="primary">ispG</name>
    <name type="ordered locus">Smal_1524</name>
</gene>
<sequence length="421" mass="45308">MHDAVTRPTPPSDATSWPRRQTHAVQIGGVTVGGGKPVVVQSMTNTDTSDVASSVKQVAELWRAGSEMVRLTVNTVEAAAAIPRIVDKLAMMGIDVPLIGDFHYNGHQLLTAEPACAEALAKYRINPGNVGFGKKKDLQFAQLIEFAIRYNKPVRIGANWGSLDQALAAKLMDENNHREQPWDAGRVLREALIRSALDSAEQAVEIGLPRDRIVLSAKVSGVQELIAVYRDLAQRSDFALHLGLTEAGIGSKGIVASSAALSVLLQEGIGDTIRISLTPEPGQSRTQEVIVAQELLQTTGQRAFTPLVTACPGCGRTTSEFFQELAKVVQSHVREKMPMWKIQHPGAENMTLAVMGCIVNGPGESRHANIGISLPGTGETPAAPVFVDGEKKVTLRGENIAQDFVALIDDYVERTYVRNAG</sequence>
<proteinExistence type="inferred from homology"/>
<name>ISPG_STRM5</name>
<dbReference type="EC" id="1.17.7.3" evidence="1"/>
<dbReference type="EMBL" id="CP001111">
    <property type="protein sequence ID" value="ACF51229.1"/>
    <property type="molecule type" value="Genomic_DNA"/>
</dbReference>
<dbReference type="RefSeq" id="WP_012510704.1">
    <property type="nucleotide sequence ID" value="NC_011071.1"/>
</dbReference>
<dbReference type="SMR" id="B4SRZ0"/>
<dbReference type="STRING" id="391008.Smal_1524"/>
<dbReference type="KEGG" id="smt:Smal_1524"/>
<dbReference type="eggNOG" id="COG0821">
    <property type="taxonomic scope" value="Bacteria"/>
</dbReference>
<dbReference type="HOGENOM" id="CLU_042258_1_0_6"/>
<dbReference type="OrthoDB" id="9803214at2"/>
<dbReference type="UniPathway" id="UPA00056">
    <property type="reaction ID" value="UER00096"/>
</dbReference>
<dbReference type="Proteomes" id="UP000001867">
    <property type="component" value="Chromosome"/>
</dbReference>
<dbReference type="GO" id="GO:0051539">
    <property type="term" value="F:4 iron, 4 sulfur cluster binding"/>
    <property type="evidence" value="ECO:0007669"/>
    <property type="project" value="UniProtKB-UniRule"/>
</dbReference>
<dbReference type="GO" id="GO:0046429">
    <property type="term" value="F:4-hydroxy-3-methylbut-2-en-1-yl diphosphate synthase activity (ferredoxin)"/>
    <property type="evidence" value="ECO:0007669"/>
    <property type="project" value="UniProtKB-UniRule"/>
</dbReference>
<dbReference type="GO" id="GO:0141197">
    <property type="term" value="F:4-hydroxy-3-methylbut-2-enyl-diphosphate synthase activity (flavodoxin)"/>
    <property type="evidence" value="ECO:0007669"/>
    <property type="project" value="UniProtKB-EC"/>
</dbReference>
<dbReference type="GO" id="GO:0005506">
    <property type="term" value="F:iron ion binding"/>
    <property type="evidence" value="ECO:0007669"/>
    <property type="project" value="InterPro"/>
</dbReference>
<dbReference type="GO" id="GO:0019288">
    <property type="term" value="P:isopentenyl diphosphate biosynthetic process, methylerythritol 4-phosphate pathway"/>
    <property type="evidence" value="ECO:0007669"/>
    <property type="project" value="UniProtKB-UniRule"/>
</dbReference>
<dbReference type="GO" id="GO:0016114">
    <property type="term" value="P:terpenoid biosynthetic process"/>
    <property type="evidence" value="ECO:0007669"/>
    <property type="project" value="InterPro"/>
</dbReference>
<dbReference type="FunFam" id="3.30.413.10:FF:000012">
    <property type="entry name" value="4-hydroxy-3-methylbut-2-en-1-yl diphosphate synthase (flavodoxin)"/>
    <property type="match status" value="1"/>
</dbReference>
<dbReference type="Gene3D" id="3.20.20.20">
    <property type="entry name" value="Dihydropteroate synthase-like"/>
    <property type="match status" value="1"/>
</dbReference>
<dbReference type="Gene3D" id="3.30.413.10">
    <property type="entry name" value="Sulfite Reductase Hemoprotein, domain 1"/>
    <property type="match status" value="1"/>
</dbReference>
<dbReference type="HAMAP" id="MF_00159">
    <property type="entry name" value="IspG"/>
    <property type="match status" value="1"/>
</dbReference>
<dbReference type="InterPro" id="IPR011005">
    <property type="entry name" value="Dihydropteroate_synth-like_sf"/>
</dbReference>
<dbReference type="InterPro" id="IPR016425">
    <property type="entry name" value="IspG_bac"/>
</dbReference>
<dbReference type="InterPro" id="IPR004588">
    <property type="entry name" value="IspG_bac-typ"/>
</dbReference>
<dbReference type="InterPro" id="IPR045854">
    <property type="entry name" value="NO2/SO3_Rdtase_4Fe4S_sf"/>
</dbReference>
<dbReference type="NCBIfam" id="TIGR00612">
    <property type="entry name" value="ispG_gcpE"/>
    <property type="match status" value="1"/>
</dbReference>
<dbReference type="NCBIfam" id="NF001540">
    <property type="entry name" value="PRK00366.1"/>
    <property type="match status" value="1"/>
</dbReference>
<dbReference type="PANTHER" id="PTHR30454">
    <property type="entry name" value="4-HYDROXY-3-METHYLBUT-2-EN-1-YL DIPHOSPHATE SYNTHASE"/>
    <property type="match status" value="1"/>
</dbReference>
<dbReference type="PANTHER" id="PTHR30454:SF0">
    <property type="entry name" value="4-HYDROXY-3-METHYLBUT-2-EN-1-YL DIPHOSPHATE SYNTHASE (FERREDOXIN), CHLOROPLASTIC"/>
    <property type="match status" value="1"/>
</dbReference>
<dbReference type="Pfam" id="PF04551">
    <property type="entry name" value="GcpE"/>
    <property type="match status" value="1"/>
</dbReference>
<dbReference type="PIRSF" id="PIRSF004640">
    <property type="entry name" value="IspG"/>
    <property type="match status" value="1"/>
</dbReference>
<accession>B4SRZ0</accession>
<organism>
    <name type="scientific">Stenotrophomonas maltophilia (strain R551-3)</name>
    <dbReference type="NCBI Taxonomy" id="391008"/>
    <lineage>
        <taxon>Bacteria</taxon>
        <taxon>Pseudomonadati</taxon>
        <taxon>Pseudomonadota</taxon>
        <taxon>Gammaproteobacteria</taxon>
        <taxon>Lysobacterales</taxon>
        <taxon>Lysobacteraceae</taxon>
        <taxon>Stenotrophomonas</taxon>
        <taxon>Stenotrophomonas maltophilia group</taxon>
    </lineage>
</organism>
<protein>
    <recommendedName>
        <fullName evidence="1">4-hydroxy-3-methylbut-2-en-1-yl diphosphate synthase (flavodoxin)</fullName>
        <ecNumber evidence="1">1.17.7.3</ecNumber>
    </recommendedName>
    <alternativeName>
        <fullName evidence="1">1-hydroxy-2-methyl-2-(E)-butenyl 4-diphosphate synthase</fullName>
    </alternativeName>
</protein>
<comment type="function">
    <text evidence="1">Converts 2C-methyl-D-erythritol 2,4-cyclodiphosphate (ME-2,4cPP) into 1-hydroxy-2-methyl-2-(E)-butenyl 4-diphosphate.</text>
</comment>
<comment type="catalytic activity">
    <reaction evidence="1">
        <text>(2E)-4-hydroxy-3-methylbut-2-enyl diphosphate + oxidized [flavodoxin] + H2O + 2 H(+) = 2-C-methyl-D-erythritol 2,4-cyclic diphosphate + reduced [flavodoxin]</text>
        <dbReference type="Rhea" id="RHEA:43604"/>
        <dbReference type="Rhea" id="RHEA-COMP:10622"/>
        <dbReference type="Rhea" id="RHEA-COMP:10623"/>
        <dbReference type="ChEBI" id="CHEBI:15377"/>
        <dbReference type="ChEBI" id="CHEBI:15378"/>
        <dbReference type="ChEBI" id="CHEBI:57618"/>
        <dbReference type="ChEBI" id="CHEBI:58210"/>
        <dbReference type="ChEBI" id="CHEBI:58483"/>
        <dbReference type="ChEBI" id="CHEBI:128753"/>
        <dbReference type="EC" id="1.17.7.3"/>
    </reaction>
</comment>
<comment type="cofactor">
    <cofactor evidence="1">
        <name>[4Fe-4S] cluster</name>
        <dbReference type="ChEBI" id="CHEBI:49883"/>
    </cofactor>
    <text evidence="1">Binds 1 [4Fe-4S] cluster.</text>
</comment>
<comment type="pathway">
    <text evidence="1">Isoprenoid biosynthesis; isopentenyl diphosphate biosynthesis via DXP pathway; isopentenyl diphosphate from 1-deoxy-D-xylulose 5-phosphate: step 5/6.</text>
</comment>
<comment type="similarity">
    <text evidence="1">Belongs to the IspG family.</text>
</comment>
<keyword id="KW-0004">4Fe-4S</keyword>
<keyword id="KW-0408">Iron</keyword>
<keyword id="KW-0411">Iron-sulfur</keyword>
<keyword id="KW-0414">Isoprene biosynthesis</keyword>
<keyword id="KW-0479">Metal-binding</keyword>
<keyword id="KW-0560">Oxidoreductase</keyword>